<proteinExistence type="inferred from homology"/>
<comment type="function">
    <text evidence="1">Necessary for the introduction of cis unsaturation into fatty acids. Catalyzes the dehydration of (3R)-3-hydroxydecanoyl-ACP to E-(2)-decenoyl-ACP and then its isomerization to Z-(3)-decenoyl-ACP. Can catalyze the dehydratase reaction for beta-hydroxyacyl-ACPs with saturated chain lengths up to 16:0, being most active on intermediate chain length.</text>
</comment>
<comment type="catalytic activity">
    <reaction evidence="1">
        <text>a (3R)-hydroxyacyl-[ACP] = a (2E)-enoyl-[ACP] + H2O</text>
        <dbReference type="Rhea" id="RHEA:13097"/>
        <dbReference type="Rhea" id="RHEA-COMP:9925"/>
        <dbReference type="Rhea" id="RHEA-COMP:9945"/>
        <dbReference type="ChEBI" id="CHEBI:15377"/>
        <dbReference type="ChEBI" id="CHEBI:78784"/>
        <dbReference type="ChEBI" id="CHEBI:78827"/>
        <dbReference type="EC" id="4.2.1.59"/>
    </reaction>
</comment>
<comment type="catalytic activity">
    <reaction evidence="1">
        <text>(3R)-hydroxydecanoyl-[ACP] = (2E)-decenoyl-[ACP] + H2O</text>
        <dbReference type="Rhea" id="RHEA:41860"/>
        <dbReference type="Rhea" id="RHEA-COMP:9638"/>
        <dbReference type="Rhea" id="RHEA-COMP:9639"/>
        <dbReference type="ChEBI" id="CHEBI:15377"/>
        <dbReference type="ChEBI" id="CHEBI:78466"/>
        <dbReference type="ChEBI" id="CHEBI:78467"/>
    </reaction>
</comment>
<comment type="catalytic activity">
    <reaction evidence="1">
        <text>(2E)-decenoyl-[ACP] = (3Z)-decenoyl-[ACP]</text>
        <dbReference type="Rhea" id="RHEA:23568"/>
        <dbReference type="Rhea" id="RHEA-COMP:9639"/>
        <dbReference type="Rhea" id="RHEA-COMP:9927"/>
        <dbReference type="ChEBI" id="CHEBI:78467"/>
        <dbReference type="ChEBI" id="CHEBI:78798"/>
        <dbReference type="EC" id="5.3.3.14"/>
    </reaction>
</comment>
<comment type="pathway">
    <text evidence="1">Lipid metabolism; fatty acid biosynthesis.</text>
</comment>
<comment type="subunit">
    <text evidence="1">Homodimer.</text>
</comment>
<comment type="subcellular location">
    <subcellularLocation>
        <location evidence="1">Cytoplasm</location>
    </subcellularLocation>
</comment>
<comment type="similarity">
    <text evidence="1">Belongs to the thioester dehydratase family. FabA subfamily.</text>
</comment>
<feature type="chain" id="PRO_0000091602" description="3-hydroxydecanoyl-[acyl-carrier-protein] dehydratase">
    <location>
        <begin position="1"/>
        <end position="171"/>
    </location>
</feature>
<feature type="active site" evidence="1">
    <location>
        <position position="70"/>
    </location>
</feature>
<dbReference type="EC" id="4.2.1.59" evidence="1"/>
<dbReference type="EC" id="5.3.3.14" evidence="1"/>
<dbReference type="EMBL" id="AE017282">
    <property type="protein sequence ID" value="AAU91070.1"/>
    <property type="molecule type" value="Genomic_DNA"/>
</dbReference>
<dbReference type="RefSeq" id="WP_010962073.1">
    <property type="nucleotide sequence ID" value="NC_002977.6"/>
</dbReference>
<dbReference type="SMR" id="Q603C9"/>
<dbReference type="STRING" id="243233.MCA2878"/>
<dbReference type="GeneID" id="88225051"/>
<dbReference type="KEGG" id="mca:MCA2878"/>
<dbReference type="eggNOG" id="COG0764">
    <property type="taxonomic scope" value="Bacteria"/>
</dbReference>
<dbReference type="HOGENOM" id="CLU_097925_0_0_6"/>
<dbReference type="UniPathway" id="UPA00094"/>
<dbReference type="Proteomes" id="UP000006821">
    <property type="component" value="Chromosome"/>
</dbReference>
<dbReference type="GO" id="GO:0005737">
    <property type="term" value="C:cytoplasm"/>
    <property type="evidence" value="ECO:0007669"/>
    <property type="project" value="UniProtKB-SubCell"/>
</dbReference>
<dbReference type="GO" id="GO:0019171">
    <property type="term" value="F:(3R)-hydroxyacyl-[acyl-carrier-protein] dehydratase activity"/>
    <property type="evidence" value="ECO:0007669"/>
    <property type="project" value="UniProtKB-UniRule"/>
</dbReference>
<dbReference type="GO" id="GO:0034017">
    <property type="term" value="F:trans-2-decenoyl-acyl-carrier-protein isomerase activity"/>
    <property type="evidence" value="ECO:0007669"/>
    <property type="project" value="UniProtKB-UniRule"/>
</dbReference>
<dbReference type="GO" id="GO:0006636">
    <property type="term" value="P:unsaturated fatty acid biosynthetic process"/>
    <property type="evidence" value="ECO:0007669"/>
    <property type="project" value="UniProtKB-UniRule"/>
</dbReference>
<dbReference type="CDD" id="cd01287">
    <property type="entry name" value="FabA"/>
    <property type="match status" value="1"/>
</dbReference>
<dbReference type="Gene3D" id="3.10.129.10">
    <property type="entry name" value="Hotdog Thioesterase"/>
    <property type="match status" value="1"/>
</dbReference>
<dbReference type="HAMAP" id="MF_00405">
    <property type="entry name" value="FabA"/>
    <property type="match status" value="1"/>
</dbReference>
<dbReference type="InterPro" id="IPR010083">
    <property type="entry name" value="FabA"/>
</dbReference>
<dbReference type="InterPro" id="IPR013114">
    <property type="entry name" value="FabA_FabZ"/>
</dbReference>
<dbReference type="InterPro" id="IPR029069">
    <property type="entry name" value="HotDog_dom_sf"/>
</dbReference>
<dbReference type="NCBIfam" id="TIGR01749">
    <property type="entry name" value="fabA"/>
    <property type="match status" value="1"/>
</dbReference>
<dbReference type="NCBIfam" id="NF003509">
    <property type="entry name" value="PRK05174.1"/>
    <property type="match status" value="1"/>
</dbReference>
<dbReference type="PANTHER" id="PTHR30272">
    <property type="entry name" value="3-HYDROXYACYL-[ACYL-CARRIER-PROTEIN] DEHYDRATASE"/>
    <property type="match status" value="1"/>
</dbReference>
<dbReference type="PANTHER" id="PTHR30272:SF8">
    <property type="entry name" value="3-HYDROXYDECANOYL-[ACYL-CARRIER-PROTEIN] DEHYDRATASE"/>
    <property type="match status" value="1"/>
</dbReference>
<dbReference type="Pfam" id="PF07977">
    <property type="entry name" value="FabA"/>
    <property type="match status" value="1"/>
</dbReference>
<dbReference type="SUPFAM" id="SSF54637">
    <property type="entry name" value="Thioesterase/thiol ester dehydrase-isomerase"/>
    <property type="match status" value="1"/>
</dbReference>
<protein>
    <recommendedName>
        <fullName evidence="1">3-hydroxydecanoyl-[acyl-carrier-protein] dehydratase</fullName>
        <ecNumber evidence="1">4.2.1.59</ecNumber>
    </recommendedName>
    <alternativeName>
        <fullName evidence="1">3-hydroxyacyl-[acyl-carrier-protein] dehydratase FabA</fullName>
    </alternativeName>
    <alternativeName>
        <fullName evidence="1">Beta-hydroxydecanoyl thioester dehydrase</fullName>
    </alternativeName>
    <alternativeName>
        <fullName evidence="1">Trans-2-decenoyl-[acyl-carrier-protein] isomerase</fullName>
        <ecNumber evidence="1">5.3.3.14</ecNumber>
    </alternativeName>
</protein>
<gene>
    <name evidence="1" type="primary">fabA</name>
    <name type="ordered locus">MCA2878</name>
</gene>
<keyword id="KW-0963">Cytoplasm</keyword>
<keyword id="KW-0275">Fatty acid biosynthesis</keyword>
<keyword id="KW-0276">Fatty acid metabolism</keyword>
<keyword id="KW-0413">Isomerase</keyword>
<keyword id="KW-0444">Lipid biosynthesis</keyword>
<keyword id="KW-0443">Lipid metabolism</keyword>
<keyword id="KW-0456">Lyase</keyword>
<keyword id="KW-1185">Reference proteome</keyword>
<evidence type="ECO:0000255" key="1">
    <source>
        <dbReference type="HAMAP-Rule" id="MF_00405"/>
    </source>
</evidence>
<reference key="1">
    <citation type="journal article" date="2004" name="PLoS Biol.">
        <title>Genomic insights into methanotrophy: the complete genome sequence of Methylococcus capsulatus (Bath).</title>
        <authorList>
            <person name="Ward N.L."/>
            <person name="Larsen O."/>
            <person name="Sakwa J."/>
            <person name="Bruseth L."/>
            <person name="Khouri H.M."/>
            <person name="Durkin A.S."/>
            <person name="Dimitrov G."/>
            <person name="Jiang L."/>
            <person name="Scanlan D."/>
            <person name="Kang K.H."/>
            <person name="Lewis M.R."/>
            <person name="Nelson K.E."/>
            <person name="Methe B.A."/>
            <person name="Wu M."/>
            <person name="Heidelberg J.F."/>
            <person name="Paulsen I.T."/>
            <person name="Fouts D.E."/>
            <person name="Ravel J."/>
            <person name="Tettelin H."/>
            <person name="Ren Q."/>
            <person name="Read T.D."/>
            <person name="DeBoy R.T."/>
            <person name="Seshadri R."/>
            <person name="Salzberg S.L."/>
            <person name="Jensen H.B."/>
            <person name="Birkeland N.K."/>
            <person name="Nelson W.C."/>
            <person name="Dodson R.J."/>
            <person name="Grindhaug S.H."/>
            <person name="Holt I.E."/>
            <person name="Eidhammer I."/>
            <person name="Jonasen I."/>
            <person name="Vanaken S."/>
            <person name="Utterback T.R."/>
            <person name="Feldblyum T.V."/>
            <person name="Fraser C.M."/>
            <person name="Lillehaug J.R."/>
            <person name="Eisen J.A."/>
        </authorList>
    </citation>
    <scope>NUCLEOTIDE SEQUENCE [LARGE SCALE GENOMIC DNA]</scope>
    <source>
        <strain>ATCC 33009 / NCIMB 11132 / Bath</strain>
    </source>
</reference>
<sequence>MSRRNSYTWDELLQCARGEMFGPGNAQLPAPPMLMFDRITHIDSVGGAFDKGMIVAELDVKPELWFFDCHFISDPVMPGCLGLDAMWQMVGFYLGWIGGKGRGRALGVGEVKFRGQVLPHNRLVTYRINLKRVILRKLVMGIADAEMECDGKVIYEANDLRVGLFTSTDDF</sequence>
<organism>
    <name type="scientific">Methylococcus capsulatus (strain ATCC 33009 / NCIMB 11132 / Bath)</name>
    <dbReference type="NCBI Taxonomy" id="243233"/>
    <lineage>
        <taxon>Bacteria</taxon>
        <taxon>Pseudomonadati</taxon>
        <taxon>Pseudomonadota</taxon>
        <taxon>Gammaproteobacteria</taxon>
        <taxon>Methylococcales</taxon>
        <taxon>Methylococcaceae</taxon>
        <taxon>Methylococcus</taxon>
    </lineage>
</organism>
<name>FABA_METCA</name>
<accession>Q603C9</accession>